<protein>
    <recommendedName>
        <fullName evidence="1">S-methyl-5'-thioadenosine phosphorylase</fullName>
        <ecNumber evidence="1">2.4.2.28</ecNumber>
    </recommendedName>
    <alternativeName>
        <fullName evidence="1">5'-methylthioadenosine phosphorylase</fullName>
        <shortName evidence="1">MTA phosphorylase</shortName>
        <shortName evidence="1">MTAP</shortName>
    </alternativeName>
</protein>
<dbReference type="EC" id="2.4.2.28" evidence="1"/>
<dbReference type="EMBL" id="AL123456">
    <property type="protein sequence ID" value="CCP43273.1"/>
    <property type="molecule type" value="Genomic_DNA"/>
</dbReference>
<dbReference type="PIR" id="B70546">
    <property type="entry name" value="B70546"/>
</dbReference>
<dbReference type="RefSeq" id="NP_215049.1">
    <property type="nucleotide sequence ID" value="NC_000962.3"/>
</dbReference>
<dbReference type="RefSeq" id="WP_003402867.1">
    <property type="nucleotide sequence ID" value="NC_000962.3"/>
</dbReference>
<dbReference type="SMR" id="O06401"/>
<dbReference type="FunCoup" id="O06401">
    <property type="interactions" value="348"/>
</dbReference>
<dbReference type="STRING" id="83332.Rv0535"/>
<dbReference type="PaxDb" id="83332-Rv0535"/>
<dbReference type="DNASU" id="887430"/>
<dbReference type="GeneID" id="887430"/>
<dbReference type="KEGG" id="mtu:Rv0535"/>
<dbReference type="KEGG" id="mtv:RVBD_0535"/>
<dbReference type="TubercuList" id="Rv0535"/>
<dbReference type="eggNOG" id="COG0005">
    <property type="taxonomic scope" value="Bacteria"/>
</dbReference>
<dbReference type="InParanoid" id="O06401"/>
<dbReference type="OrthoDB" id="1523230at2"/>
<dbReference type="PhylomeDB" id="O06401"/>
<dbReference type="BRENDA" id="2.4.2.28">
    <property type="organism ID" value="3445"/>
</dbReference>
<dbReference type="UniPathway" id="UPA00904">
    <property type="reaction ID" value="UER00873"/>
</dbReference>
<dbReference type="Proteomes" id="UP000001584">
    <property type="component" value="Chromosome"/>
</dbReference>
<dbReference type="GO" id="GO:0005829">
    <property type="term" value="C:cytosol"/>
    <property type="evidence" value="ECO:0000318"/>
    <property type="project" value="GO_Central"/>
</dbReference>
<dbReference type="GO" id="GO:0017061">
    <property type="term" value="F:S-methyl-5-thioadenosine phosphorylase activity"/>
    <property type="evidence" value="ECO:0000318"/>
    <property type="project" value="GO_Central"/>
</dbReference>
<dbReference type="GO" id="GO:0019509">
    <property type="term" value="P:L-methionine salvage from methylthioadenosine"/>
    <property type="evidence" value="ECO:0000318"/>
    <property type="project" value="GO_Central"/>
</dbReference>
<dbReference type="GO" id="GO:0006166">
    <property type="term" value="P:purine ribonucleoside salvage"/>
    <property type="evidence" value="ECO:0007669"/>
    <property type="project" value="UniProtKB-KW"/>
</dbReference>
<dbReference type="CDD" id="cd09010">
    <property type="entry name" value="MTAP_SsMTAPII_like_MTIP"/>
    <property type="match status" value="1"/>
</dbReference>
<dbReference type="FunFam" id="3.40.50.1580:FF:000013">
    <property type="entry name" value="Purine nucleoside phosphorylase"/>
    <property type="match status" value="1"/>
</dbReference>
<dbReference type="Gene3D" id="3.40.50.1580">
    <property type="entry name" value="Nucleoside phosphorylase domain"/>
    <property type="match status" value="1"/>
</dbReference>
<dbReference type="HAMAP" id="MF_01963">
    <property type="entry name" value="MTAP"/>
    <property type="match status" value="1"/>
</dbReference>
<dbReference type="InterPro" id="IPR010044">
    <property type="entry name" value="MTAP"/>
</dbReference>
<dbReference type="InterPro" id="IPR000845">
    <property type="entry name" value="Nucleoside_phosphorylase_d"/>
</dbReference>
<dbReference type="InterPro" id="IPR035994">
    <property type="entry name" value="Nucleoside_phosphorylase_sf"/>
</dbReference>
<dbReference type="NCBIfam" id="TIGR01694">
    <property type="entry name" value="MTAP"/>
    <property type="match status" value="1"/>
</dbReference>
<dbReference type="NCBIfam" id="NF005876">
    <property type="entry name" value="PRK07823.1"/>
    <property type="match status" value="1"/>
</dbReference>
<dbReference type="PANTHER" id="PTHR42679">
    <property type="entry name" value="S-METHYL-5'-THIOADENOSINE PHOSPHORYLASE"/>
    <property type="match status" value="1"/>
</dbReference>
<dbReference type="PANTHER" id="PTHR42679:SF2">
    <property type="entry name" value="S-METHYL-5'-THIOADENOSINE PHOSPHORYLASE"/>
    <property type="match status" value="1"/>
</dbReference>
<dbReference type="Pfam" id="PF01048">
    <property type="entry name" value="PNP_UDP_1"/>
    <property type="match status" value="1"/>
</dbReference>
<dbReference type="SUPFAM" id="SSF53167">
    <property type="entry name" value="Purine and uridine phosphorylases"/>
    <property type="match status" value="1"/>
</dbReference>
<proteinExistence type="evidence at protein level"/>
<reference key="1">
    <citation type="journal article" date="1998" name="Nature">
        <title>Deciphering the biology of Mycobacterium tuberculosis from the complete genome sequence.</title>
        <authorList>
            <person name="Cole S.T."/>
            <person name="Brosch R."/>
            <person name="Parkhill J."/>
            <person name="Garnier T."/>
            <person name="Churcher C.M."/>
            <person name="Harris D.E."/>
            <person name="Gordon S.V."/>
            <person name="Eiglmeier K."/>
            <person name="Gas S."/>
            <person name="Barry C.E. III"/>
            <person name="Tekaia F."/>
            <person name="Badcock K."/>
            <person name="Basham D."/>
            <person name="Brown D."/>
            <person name="Chillingworth T."/>
            <person name="Connor R."/>
            <person name="Davies R.M."/>
            <person name="Devlin K."/>
            <person name="Feltwell T."/>
            <person name="Gentles S."/>
            <person name="Hamlin N."/>
            <person name="Holroyd S."/>
            <person name="Hornsby T."/>
            <person name="Jagels K."/>
            <person name="Krogh A."/>
            <person name="McLean J."/>
            <person name="Moule S."/>
            <person name="Murphy L.D."/>
            <person name="Oliver S."/>
            <person name="Osborne J."/>
            <person name="Quail M.A."/>
            <person name="Rajandream M.A."/>
            <person name="Rogers J."/>
            <person name="Rutter S."/>
            <person name="Seeger K."/>
            <person name="Skelton S."/>
            <person name="Squares S."/>
            <person name="Squares R."/>
            <person name="Sulston J.E."/>
            <person name="Taylor K."/>
            <person name="Whitehead S."/>
            <person name="Barrell B.G."/>
        </authorList>
    </citation>
    <scope>NUCLEOTIDE SEQUENCE [LARGE SCALE GENOMIC DNA]</scope>
    <source>
        <strain>ATCC 25618 / H37Rv</strain>
    </source>
</reference>
<reference key="2">
    <citation type="journal article" date="2011" name="Mol. Cell. Proteomics">
        <title>Proteogenomic analysis of Mycobacterium tuberculosis by high resolution mass spectrometry.</title>
        <authorList>
            <person name="Kelkar D.S."/>
            <person name="Kumar D."/>
            <person name="Kumar P."/>
            <person name="Balakrishnan L."/>
            <person name="Muthusamy B."/>
            <person name="Yadav A.K."/>
            <person name="Shrivastava P."/>
            <person name="Marimuthu A."/>
            <person name="Anand S."/>
            <person name="Sundaram H."/>
            <person name="Kingsbury R."/>
            <person name="Harsha H.C."/>
            <person name="Nair B."/>
            <person name="Prasad T.S."/>
            <person name="Chauhan D.S."/>
            <person name="Katoch K."/>
            <person name="Katoch V.M."/>
            <person name="Kumar P."/>
            <person name="Chaerkady R."/>
            <person name="Ramachandran S."/>
            <person name="Dash D."/>
            <person name="Pandey A."/>
        </authorList>
    </citation>
    <scope>IDENTIFICATION BY MASS SPECTROMETRY [LARGE SCALE ANALYSIS]</scope>
    <source>
        <strain>ATCC 25618 / H37Rv</strain>
    </source>
</reference>
<reference key="3">
    <citation type="journal article" date="2012" name="Tuberculosis">
        <title>Identification of Rv0535 as methylthioadenosine phosphorylase from Mycobacterium tuberculosis.</title>
        <authorList>
            <person name="Buckoreelall K."/>
            <person name="Sun Y."/>
            <person name="Hobrath J.V."/>
            <person name="Wilson L."/>
            <person name="Parker W.B."/>
        </authorList>
    </citation>
    <scope>BIOPHYSICOCHEMICAL PROPERTIES</scope>
    <scope>CATALYTIC ACTIVITY</scope>
    <scope>ACTIVITY REGULATION</scope>
    <scope>SUBUNIT</scope>
    <source>
        <strain>ATCC 25618 / H37Rv</strain>
    </source>
</reference>
<sequence>MHNNGRMLGVIGGSGFYTFFGSDTRTVNSDTPYGQPSAPITIGTIGVHDVAFLPRHGAHHQYSAHAVPYRANMWALRALGVRRVFGPCAVGSLDPELEPGAVVVPDQLVDRTSGRADTYFDFGGVHAAFADPYCPTLRAAVTGLPGVVDGGTMVVIQGPRFSTRAESQWFAAAGCNLVNMTGYPEAVLARELELCYAAIALVTDVDAGVAAGDGVKAADVFAAFGENIELLKRLVRAAIDRVADERTCTHCQHHAGVPLPFELP</sequence>
<gene>
    <name evidence="1" type="primary">mtnP</name>
    <name type="ordered locus">Rv0535</name>
</gene>
<name>MTAP_MYCTU</name>
<evidence type="ECO:0000255" key="1">
    <source>
        <dbReference type="HAMAP-Rule" id="MF_01963"/>
    </source>
</evidence>
<evidence type="ECO:0000269" key="2">
    <source>
    </source>
</evidence>
<evidence type="ECO:0000305" key="3">
    <source>
    </source>
</evidence>
<keyword id="KW-0328">Glycosyltransferase</keyword>
<keyword id="KW-0660">Purine salvage</keyword>
<keyword id="KW-1185">Reference proteome</keyword>
<keyword id="KW-0808">Transferase</keyword>
<organism>
    <name type="scientific">Mycobacterium tuberculosis (strain ATCC 25618 / H37Rv)</name>
    <dbReference type="NCBI Taxonomy" id="83332"/>
    <lineage>
        <taxon>Bacteria</taxon>
        <taxon>Bacillati</taxon>
        <taxon>Actinomycetota</taxon>
        <taxon>Actinomycetes</taxon>
        <taxon>Mycobacteriales</taxon>
        <taxon>Mycobacteriaceae</taxon>
        <taxon>Mycobacterium</taxon>
        <taxon>Mycobacterium tuberculosis complex</taxon>
    </lineage>
</organism>
<accession>O06401</accession>
<accession>L0T6S7</accession>
<comment type="function">
    <text>Catalyzes the reversible phosphorylation of S-methyl-5'-thioadenosine (MTA) to adenine and 5-methylthioribose-1-phosphate. Involved in the breakdown of MTA, a major by-product of polyamine biosynthesis. Responsible for the first step in the methionine salvage pathway after MTA has been generated from S-adenosylmethionine. Prefers MTA, with 2% activity on adenosine, 0.8% activity on S-adenosyl-L-homocysteine and no activity on other tested nucleosides.</text>
</comment>
<comment type="catalytic activity">
    <reaction evidence="1 2">
        <text>S-methyl-5'-thioadenosine + phosphate = 5-(methylsulfanyl)-alpha-D-ribose 1-phosphate + adenine</text>
        <dbReference type="Rhea" id="RHEA:11852"/>
        <dbReference type="ChEBI" id="CHEBI:16708"/>
        <dbReference type="ChEBI" id="CHEBI:17509"/>
        <dbReference type="ChEBI" id="CHEBI:43474"/>
        <dbReference type="ChEBI" id="CHEBI:58533"/>
        <dbReference type="EC" id="2.4.2.28"/>
    </reaction>
</comment>
<comment type="activity regulation">
    <text evidence="2">Not inhibited by adenosine, potently inhibited by MT-DADMe-immucillin A.</text>
</comment>
<comment type="biophysicochemical properties">
    <kinetics>
        <KM evidence="2">9 uM for S-methyl-5'-thioadenosine</KM>
        <KM evidence="2">260 uM for phosphate</KM>
        <KM evidence="2">1700 uM for adenosine</KM>
    </kinetics>
    <phDependence>
        <text evidence="2">Optimum pH is 7-7.5.</text>
    </phDependence>
</comment>
<comment type="pathway">
    <text evidence="1">Amino-acid biosynthesis; L-methionine biosynthesis via salvage pathway; S-methyl-5-thio-alpha-D-ribose 1-phosphate from S-methyl-5'-thioadenosine (phosphorylase route): step 1/1.</text>
</comment>
<comment type="subunit">
    <text evidence="3">Homodimer.</text>
</comment>
<comment type="similarity">
    <text evidence="1">Belongs to the PNP/MTAP phosphorylase family. MTAP subfamily.</text>
</comment>
<feature type="chain" id="PRO_0000415096" description="S-methyl-5'-thioadenosine phosphorylase">
    <location>
        <begin position="1"/>
        <end position="264"/>
    </location>
</feature>
<feature type="binding site" evidence="1">
    <location>
        <position position="14"/>
    </location>
    <ligand>
        <name>phosphate</name>
        <dbReference type="ChEBI" id="CHEBI:43474"/>
    </ligand>
</feature>
<feature type="binding site" evidence="1">
    <location>
        <begin position="55"/>
        <end position="56"/>
    </location>
    <ligand>
        <name>phosphate</name>
        <dbReference type="ChEBI" id="CHEBI:43474"/>
    </ligand>
</feature>
<feature type="binding site" evidence="1">
    <location>
        <position position="180"/>
    </location>
    <ligand>
        <name>substrate</name>
    </ligand>
</feature>
<feature type="binding site" evidence="1">
    <location>
        <position position="181"/>
    </location>
    <ligand>
        <name>phosphate</name>
        <dbReference type="ChEBI" id="CHEBI:43474"/>
    </ligand>
</feature>
<feature type="binding site" evidence="1">
    <location>
        <begin position="204"/>
        <end position="206"/>
    </location>
    <ligand>
        <name>substrate</name>
    </ligand>
</feature>
<feature type="site" description="Important for substrate specificity" evidence="1">
    <location>
        <position position="162"/>
    </location>
</feature>
<feature type="site" description="Important for substrate specificity" evidence="1">
    <location>
        <position position="217"/>
    </location>
</feature>